<organism>
    <name type="scientific">Bradyrhizobium diazoefficiens (strain JCM 10833 / BCRC 13528 / IAM 13628 / NBRC 14792 / USDA 110)</name>
    <dbReference type="NCBI Taxonomy" id="224911"/>
    <lineage>
        <taxon>Bacteria</taxon>
        <taxon>Pseudomonadati</taxon>
        <taxon>Pseudomonadota</taxon>
        <taxon>Alphaproteobacteria</taxon>
        <taxon>Hyphomicrobiales</taxon>
        <taxon>Nitrobacteraceae</taxon>
        <taxon>Bradyrhizobium</taxon>
    </lineage>
</organism>
<proteinExistence type="inferred from homology"/>
<feature type="chain" id="PRO_0000140714" description="3-dehydroquinate synthase">
    <location>
        <begin position="1"/>
        <end position="382"/>
    </location>
</feature>
<feature type="binding site" evidence="1">
    <location>
        <begin position="81"/>
        <end position="86"/>
    </location>
    <ligand>
        <name>NAD(+)</name>
        <dbReference type="ChEBI" id="CHEBI:57540"/>
    </ligand>
</feature>
<feature type="binding site" evidence="1">
    <location>
        <begin position="115"/>
        <end position="119"/>
    </location>
    <ligand>
        <name>NAD(+)</name>
        <dbReference type="ChEBI" id="CHEBI:57540"/>
    </ligand>
</feature>
<feature type="binding site" evidence="1">
    <location>
        <begin position="139"/>
        <end position="140"/>
    </location>
    <ligand>
        <name>NAD(+)</name>
        <dbReference type="ChEBI" id="CHEBI:57540"/>
    </ligand>
</feature>
<feature type="binding site" evidence="1">
    <location>
        <position position="152"/>
    </location>
    <ligand>
        <name>NAD(+)</name>
        <dbReference type="ChEBI" id="CHEBI:57540"/>
    </ligand>
</feature>
<feature type="binding site" evidence="1">
    <location>
        <position position="161"/>
    </location>
    <ligand>
        <name>NAD(+)</name>
        <dbReference type="ChEBI" id="CHEBI:57540"/>
    </ligand>
</feature>
<feature type="binding site" evidence="1">
    <location>
        <position position="194"/>
    </location>
    <ligand>
        <name>Zn(2+)</name>
        <dbReference type="ChEBI" id="CHEBI:29105"/>
    </ligand>
</feature>
<feature type="binding site" evidence="1">
    <location>
        <position position="256"/>
    </location>
    <ligand>
        <name>Zn(2+)</name>
        <dbReference type="ChEBI" id="CHEBI:29105"/>
    </ligand>
</feature>
<feature type="binding site" evidence="1">
    <location>
        <position position="274"/>
    </location>
    <ligand>
        <name>Zn(2+)</name>
        <dbReference type="ChEBI" id="CHEBI:29105"/>
    </ligand>
</feature>
<keyword id="KW-0028">Amino-acid biosynthesis</keyword>
<keyword id="KW-0057">Aromatic amino acid biosynthesis</keyword>
<keyword id="KW-0170">Cobalt</keyword>
<keyword id="KW-0963">Cytoplasm</keyword>
<keyword id="KW-0456">Lyase</keyword>
<keyword id="KW-0479">Metal-binding</keyword>
<keyword id="KW-0520">NAD</keyword>
<keyword id="KW-0547">Nucleotide-binding</keyword>
<keyword id="KW-1185">Reference proteome</keyword>
<keyword id="KW-0862">Zinc</keyword>
<comment type="function">
    <text evidence="1">Catalyzes the conversion of 3-deoxy-D-arabino-heptulosonate 7-phosphate (DAHP) to dehydroquinate (DHQ).</text>
</comment>
<comment type="catalytic activity">
    <reaction evidence="1">
        <text>7-phospho-2-dehydro-3-deoxy-D-arabino-heptonate = 3-dehydroquinate + phosphate</text>
        <dbReference type="Rhea" id="RHEA:21968"/>
        <dbReference type="ChEBI" id="CHEBI:32364"/>
        <dbReference type="ChEBI" id="CHEBI:43474"/>
        <dbReference type="ChEBI" id="CHEBI:58394"/>
        <dbReference type="EC" id="4.2.3.4"/>
    </reaction>
</comment>
<comment type="cofactor">
    <cofactor evidence="1">
        <name>NAD(+)</name>
        <dbReference type="ChEBI" id="CHEBI:57540"/>
    </cofactor>
</comment>
<comment type="cofactor">
    <cofactor evidence="1">
        <name>Co(2+)</name>
        <dbReference type="ChEBI" id="CHEBI:48828"/>
    </cofactor>
    <cofactor evidence="1">
        <name>Zn(2+)</name>
        <dbReference type="ChEBI" id="CHEBI:29105"/>
    </cofactor>
    <text evidence="1">Binds 1 divalent metal cation per subunit. Can use either Co(2+) or Zn(2+).</text>
</comment>
<comment type="pathway">
    <text evidence="1">Metabolic intermediate biosynthesis; chorismate biosynthesis; chorismate from D-erythrose 4-phosphate and phosphoenolpyruvate: step 2/7.</text>
</comment>
<comment type="subcellular location">
    <subcellularLocation>
        <location evidence="1">Cytoplasm</location>
    </subcellularLocation>
</comment>
<comment type="similarity">
    <text evidence="1">Belongs to the sugar phosphate cyclases superfamily. Dehydroquinate synthase family.</text>
</comment>
<name>AROB_BRADU</name>
<evidence type="ECO:0000255" key="1">
    <source>
        <dbReference type="HAMAP-Rule" id="MF_00110"/>
    </source>
</evidence>
<reference key="1">
    <citation type="journal article" date="2002" name="DNA Res.">
        <title>Complete genomic sequence of nitrogen-fixing symbiotic bacterium Bradyrhizobium japonicum USDA110.</title>
        <authorList>
            <person name="Kaneko T."/>
            <person name="Nakamura Y."/>
            <person name="Sato S."/>
            <person name="Minamisawa K."/>
            <person name="Uchiumi T."/>
            <person name="Sasamoto S."/>
            <person name="Watanabe A."/>
            <person name="Idesawa K."/>
            <person name="Iriguchi M."/>
            <person name="Kawashima K."/>
            <person name="Kohara M."/>
            <person name="Matsumoto M."/>
            <person name="Shimpo S."/>
            <person name="Tsuruoka H."/>
            <person name="Wada T."/>
            <person name="Yamada M."/>
            <person name="Tabata S."/>
        </authorList>
    </citation>
    <scope>NUCLEOTIDE SEQUENCE [LARGE SCALE GENOMIC DNA]</scope>
    <source>
        <strain>JCM 10833 / BCRC 13528 / IAM 13628 / NBRC 14792 / USDA 110</strain>
    </source>
</reference>
<gene>
    <name evidence="1" type="primary">aroB</name>
    <name type="ordered locus">bll0187</name>
</gene>
<accession>Q89XW8</accession>
<sequence length="382" mass="40277">MTAPLKHSDPVNVDVALGDRAYDIVIGRGVLASLGERVAALRPGVRTAVVTDRTVAKHWLEPTEASLAAAGIPTSRIVVEEGEISKTYAGLEKVSEALIAAKIERNDLVIALGGGVVGDLAGFAAAILRRGVDFVQVPTSLLAQVDSSVGGKTGINSPQGKNLLGAFHQPVLVIADTAVLDTLSPRQFHAGYAEVAKYGVLGDEAFFTWLEKNHSDIFKGGSAREHAIATSCRAKAGIVSRDERETGERALLNLGHTFGHALEAATGFSDRLFHGEGVAIGMTLAAQFSAKLGMIGEADAARVERHLIEAGLPTRLQDIAGFSQEGLADADALMALMAQDKKVKRGKLTFILLEAVGRAVIAKDVEPAPVRDFLKEKLAQKA</sequence>
<dbReference type="EC" id="4.2.3.4" evidence="1"/>
<dbReference type="EMBL" id="BA000040">
    <property type="protein sequence ID" value="BAC45452.1"/>
    <property type="molecule type" value="Genomic_DNA"/>
</dbReference>
<dbReference type="RefSeq" id="NP_766827.1">
    <property type="nucleotide sequence ID" value="NC_004463.1"/>
</dbReference>
<dbReference type="RefSeq" id="WP_011083019.1">
    <property type="nucleotide sequence ID" value="NC_004463.1"/>
</dbReference>
<dbReference type="SMR" id="Q89XW8"/>
<dbReference type="FunCoup" id="Q89XW8">
    <property type="interactions" value="634"/>
</dbReference>
<dbReference type="STRING" id="224911.AAV28_40185"/>
<dbReference type="EnsemblBacteria" id="BAC45452">
    <property type="protein sequence ID" value="BAC45452"/>
    <property type="gene ID" value="BAC45452"/>
</dbReference>
<dbReference type="GeneID" id="46495340"/>
<dbReference type="KEGG" id="bja:bll0187"/>
<dbReference type="PATRIC" id="fig|224911.44.peg.8708"/>
<dbReference type="eggNOG" id="COG0337">
    <property type="taxonomic scope" value="Bacteria"/>
</dbReference>
<dbReference type="HOGENOM" id="CLU_001201_0_2_5"/>
<dbReference type="InParanoid" id="Q89XW8"/>
<dbReference type="OrthoDB" id="9806583at2"/>
<dbReference type="PhylomeDB" id="Q89XW8"/>
<dbReference type="UniPathway" id="UPA00053">
    <property type="reaction ID" value="UER00085"/>
</dbReference>
<dbReference type="Proteomes" id="UP000002526">
    <property type="component" value="Chromosome"/>
</dbReference>
<dbReference type="GO" id="GO:0005737">
    <property type="term" value="C:cytoplasm"/>
    <property type="evidence" value="ECO:0007669"/>
    <property type="project" value="UniProtKB-SubCell"/>
</dbReference>
<dbReference type="GO" id="GO:0003856">
    <property type="term" value="F:3-dehydroquinate synthase activity"/>
    <property type="evidence" value="ECO:0000318"/>
    <property type="project" value="GO_Central"/>
</dbReference>
<dbReference type="GO" id="GO:0046872">
    <property type="term" value="F:metal ion binding"/>
    <property type="evidence" value="ECO:0007669"/>
    <property type="project" value="UniProtKB-KW"/>
</dbReference>
<dbReference type="GO" id="GO:0000166">
    <property type="term" value="F:nucleotide binding"/>
    <property type="evidence" value="ECO:0007669"/>
    <property type="project" value="UniProtKB-KW"/>
</dbReference>
<dbReference type="GO" id="GO:0008652">
    <property type="term" value="P:amino acid biosynthetic process"/>
    <property type="evidence" value="ECO:0007669"/>
    <property type="project" value="UniProtKB-KW"/>
</dbReference>
<dbReference type="GO" id="GO:0009073">
    <property type="term" value="P:aromatic amino acid family biosynthetic process"/>
    <property type="evidence" value="ECO:0000318"/>
    <property type="project" value="GO_Central"/>
</dbReference>
<dbReference type="GO" id="GO:0009423">
    <property type="term" value="P:chorismate biosynthetic process"/>
    <property type="evidence" value="ECO:0007669"/>
    <property type="project" value="UniProtKB-UniRule"/>
</dbReference>
<dbReference type="CDD" id="cd08195">
    <property type="entry name" value="DHQS"/>
    <property type="match status" value="1"/>
</dbReference>
<dbReference type="FunFam" id="3.40.50.1970:FF:000001">
    <property type="entry name" value="3-dehydroquinate synthase"/>
    <property type="match status" value="1"/>
</dbReference>
<dbReference type="Gene3D" id="3.40.50.1970">
    <property type="match status" value="1"/>
</dbReference>
<dbReference type="Gene3D" id="1.20.1090.10">
    <property type="entry name" value="Dehydroquinate synthase-like - alpha domain"/>
    <property type="match status" value="1"/>
</dbReference>
<dbReference type="HAMAP" id="MF_00110">
    <property type="entry name" value="DHQ_synthase"/>
    <property type="match status" value="1"/>
</dbReference>
<dbReference type="InterPro" id="IPR050071">
    <property type="entry name" value="Dehydroquinate_synthase"/>
</dbReference>
<dbReference type="InterPro" id="IPR016037">
    <property type="entry name" value="DHQ_synth_AroB"/>
</dbReference>
<dbReference type="InterPro" id="IPR030963">
    <property type="entry name" value="DHQ_synth_fam"/>
</dbReference>
<dbReference type="InterPro" id="IPR030960">
    <property type="entry name" value="DHQS/DOIS_N"/>
</dbReference>
<dbReference type="InterPro" id="IPR056179">
    <property type="entry name" value="DHQS_C"/>
</dbReference>
<dbReference type="NCBIfam" id="TIGR01357">
    <property type="entry name" value="aroB"/>
    <property type="match status" value="1"/>
</dbReference>
<dbReference type="PANTHER" id="PTHR43622">
    <property type="entry name" value="3-DEHYDROQUINATE SYNTHASE"/>
    <property type="match status" value="1"/>
</dbReference>
<dbReference type="PANTHER" id="PTHR43622:SF7">
    <property type="entry name" value="3-DEHYDROQUINATE SYNTHASE, CHLOROPLASTIC"/>
    <property type="match status" value="1"/>
</dbReference>
<dbReference type="Pfam" id="PF01761">
    <property type="entry name" value="DHQ_synthase"/>
    <property type="match status" value="1"/>
</dbReference>
<dbReference type="Pfam" id="PF24621">
    <property type="entry name" value="DHQS_C"/>
    <property type="match status" value="1"/>
</dbReference>
<dbReference type="PIRSF" id="PIRSF001455">
    <property type="entry name" value="DHQ_synth"/>
    <property type="match status" value="1"/>
</dbReference>
<dbReference type="SUPFAM" id="SSF56796">
    <property type="entry name" value="Dehydroquinate synthase-like"/>
    <property type="match status" value="1"/>
</dbReference>
<protein>
    <recommendedName>
        <fullName evidence="1">3-dehydroquinate synthase</fullName>
        <shortName evidence="1">DHQS</shortName>
        <ecNumber evidence="1">4.2.3.4</ecNumber>
    </recommendedName>
</protein>